<dbReference type="EC" id="7.1.1.-" evidence="1"/>
<dbReference type="EMBL" id="AP009371">
    <property type="protein sequence ID" value="BAF50252.1"/>
    <property type="molecule type" value="Genomic_DNA"/>
</dbReference>
<dbReference type="RefSeq" id="YP_001123427.1">
    <property type="nucleotide sequence ID" value="NC_009270.1"/>
</dbReference>
<dbReference type="SMR" id="A4QKP7"/>
<dbReference type="GeneID" id="4961731"/>
<dbReference type="GO" id="GO:0009535">
    <property type="term" value="C:chloroplast thylakoid membrane"/>
    <property type="evidence" value="ECO:0007669"/>
    <property type="project" value="UniProtKB-SubCell"/>
</dbReference>
<dbReference type="GO" id="GO:0030964">
    <property type="term" value="C:NADH dehydrogenase complex"/>
    <property type="evidence" value="ECO:0007669"/>
    <property type="project" value="TreeGrafter"/>
</dbReference>
<dbReference type="GO" id="GO:0016655">
    <property type="term" value="F:oxidoreductase activity, acting on NAD(P)H, quinone or similar compound as acceptor"/>
    <property type="evidence" value="ECO:0007669"/>
    <property type="project" value="UniProtKB-UniRule"/>
</dbReference>
<dbReference type="GO" id="GO:0048038">
    <property type="term" value="F:quinone binding"/>
    <property type="evidence" value="ECO:0007669"/>
    <property type="project" value="UniProtKB-KW"/>
</dbReference>
<dbReference type="GO" id="GO:0042773">
    <property type="term" value="P:ATP synthesis coupled electron transport"/>
    <property type="evidence" value="ECO:0007669"/>
    <property type="project" value="InterPro"/>
</dbReference>
<dbReference type="GO" id="GO:0019684">
    <property type="term" value="P:photosynthesis, light reaction"/>
    <property type="evidence" value="ECO:0007669"/>
    <property type="project" value="UniProtKB-UniRule"/>
</dbReference>
<dbReference type="FunFam" id="1.10.287.3510:FF:000001">
    <property type="entry name" value="NADH-quinone oxidoreductase subunit K"/>
    <property type="match status" value="1"/>
</dbReference>
<dbReference type="Gene3D" id="1.10.287.3510">
    <property type="match status" value="1"/>
</dbReference>
<dbReference type="HAMAP" id="MF_01456">
    <property type="entry name" value="NDH1_NuoK"/>
    <property type="match status" value="1"/>
</dbReference>
<dbReference type="InterPro" id="IPR001133">
    <property type="entry name" value="NADH_UbQ_OxRdtase_chain4L/K"/>
</dbReference>
<dbReference type="InterPro" id="IPR039428">
    <property type="entry name" value="NUOK/Mnh_C1-like"/>
</dbReference>
<dbReference type="NCBIfam" id="NF004320">
    <property type="entry name" value="PRK05715.1-2"/>
    <property type="match status" value="1"/>
</dbReference>
<dbReference type="NCBIfam" id="NF004322">
    <property type="entry name" value="PRK05715.1-4"/>
    <property type="match status" value="1"/>
</dbReference>
<dbReference type="PANTHER" id="PTHR11434:SF16">
    <property type="entry name" value="NADH-UBIQUINONE OXIDOREDUCTASE CHAIN 4L"/>
    <property type="match status" value="1"/>
</dbReference>
<dbReference type="PANTHER" id="PTHR11434">
    <property type="entry name" value="NADH-UBIQUINONE OXIDOREDUCTASE SUBUNIT ND4L"/>
    <property type="match status" value="1"/>
</dbReference>
<dbReference type="Pfam" id="PF00420">
    <property type="entry name" value="Oxidored_q2"/>
    <property type="match status" value="1"/>
</dbReference>
<comment type="function">
    <text evidence="1">NDH shuttles electrons from NAD(P)H:plastoquinone, via FMN and iron-sulfur (Fe-S) centers, to quinones in the photosynthetic chain and possibly in a chloroplast respiratory chain. The immediate electron acceptor for the enzyme in this species is believed to be plastoquinone. Couples the redox reaction to proton translocation, and thus conserves the redox energy in a proton gradient.</text>
</comment>
<comment type="catalytic activity">
    <reaction evidence="1">
        <text>a plastoquinone + NADH + (n+1) H(+)(in) = a plastoquinol + NAD(+) + n H(+)(out)</text>
        <dbReference type="Rhea" id="RHEA:42608"/>
        <dbReference type="Rhea" id="RHEA-COMP:9561"/>
        <dbReference type="Rhea" id="RHEA-COMP:9562"/>
        <dbReference type="ChEBI" id="CHEBI:15378"/>
        <dbReference type="ChEBI" id="CHEBI:17757"/>
        <dbReference type="ChEBI" id="CHEBI:57540"/>
        <dbReference type="ChEBI" id="CHEBI:57945"/>
        <dbReference type="ChEBI" id="CHEBI:62192"/>
    </reaction>
</comment>
<comment type="catalytic activity">
    <reaction evidence="1">
        <text>a plastoquinone + NADPH + (n+1) H(+)(in) = a plastoquinol + NADP(+) + n H(+)(out)</text>
        <dbReference type="Rhea" id="RHEA:42612"/>
        <dbReference type="Rhea" id="RHEA-COMP:9561"/>
        <dbReference type="Rhea" id="RHEA-COMP:9562"/>
        <dbReference type="ChEBI" id="CHEBI:15378"/>
        <dbReference type="ChEBI" id="CHEBI:17757"/>
        <dbReference type="ChEBI" id="CHEBI:57783"/>
        <dbReference type="ChEBI" id="CHEBI:58349"/>
        <dbReference type="ChEBI" id="CHEBI:62192"/>
    </reaction>
</comment>
<comment type="subunit">
    <text evidence="1">NDH is composed of at least 16 different subunits, 5 of which are encoded in the nucleus.</text>
</comment>
<comment type="subcellular location">
    <subcellularLocation>
        <location evidence="1">Plastid</location>
        <location evidence="1">Chloroplast thylakoid membrane</location>
        <topology evidence="1">Multi-pass membrane protein</topology>
    </subcellularLocation>
</comment>
<comment type="similarity">
    <text evidence="1">Belongs to the complex I subunit 4L family.</text>
</comment>
<name>NU4LC_CAPBU</name>
<geneLocation type="chloroplast"/>
<gene>
    <name evidence="1" type="primary">ndhE</name>
</gene>
<evidence type="ECO:0000255" key="1">
    <source>
        <dbReference type="HAMAP-Rule" id="MF_01456"/>
    </source>
</evidence>
<organism>
    <name type="scientific">Capsella bursa-pastoris</name>
    <name type="common">Shepherd's purse</name>
    <name type="synonym">Thlaspi bursa-pastoris</name>
    <dbReference type="NCBI Taxonomy" id="3719"/>
    <lineage>
        <taxon>Eukaryota</taxon>
        <taxon>Viridiplantae</taxon>
        <taxon>Streptophyta</taxon>
        <taxon>Embryophyta</taxon>
        <taxon>Tracheophyta</taxon>
        <taxon>Spermatophyta</taxon>
        <taxon>Magnoliopsida</taxon>
        <taxon>eudicotyledons</taxon>
        <taxon>Gunneridae</taxon>
        <taxon>Pentapetalae</taxon>
        <taxon>rosids</taxon>
        <taxon>malvids</taxon>
        <taxon>Brassicales</taxon>
        <taxon>Brassicaceae</taxon>
        <taxon>Camelineae</taxon>
        <taxon>Capsella</taxon>
    </lineage>
</organism>
<proteinExistence type="inferred from homology"/>
<keyword id="KW-0150">Chloroplast</keyword>
<keyword id="KW-0472">Membrane</keyword>
<keyword id="KW-0520">NAD</keyword>
<keyword id="KW-0521">NADP</keyword>
<keyword id="KW-0934">Plastid</keyword>
<keyword id="KW-0618">Plastoquinone</keyword>
<keyword id="KW-0874">Quinone</keyword>
<keyword id="KW-0793">Thylakoid</keyword>
<keyword id="KW-1278">Translocase</keyword>
<keyword id="KW-0812">Transmembrane</keyword>
<keyword id="KW-1133">Transmembrane helix</keyword>
<keyword id="KW-0813">Transport</keyword>
<sequence>MILEHVLVLSAYLFLIGLYGLITSRNMVRALMCLELILNAVNMNFVTFSDFFDNSQLKGDIFCIFVIAIAAAEAAIGLAIVSSIYRNRKSTRINQSTLLNK</sequence>
<accession>A4QKP7</accession>
<feature type="chain" id="PRO_0000360311" description="NAD(P)H-quinone oxidoreductase subunit 4L, chloroplastic">
    <location>
        <begin position="1"/>
        <end position="101"/>
    </location>
</feature>
<feature type="transmembrane region" description="Helical" evidence="1">
    <location>
        <begin position="2"/>
        <end position="22"/>
    </location>
</feature>
<feature type="transmembrane region" description="Helical" evidence="1">
    <location>
        <begin position="32"/>
        <end position="52"/>
    </location>
</feature>
<feature type="transmembrane region" description="Helical" evidence="1">
    <location>
        <begin position="61"/>
        <end position="81"/>
    </location>
</feature>
<reference key="1">
    <citation type="submission" date="2007-03" db="EMBL/GenBank/DDBJ databases">
        <title>Sequencing analysis of Capsella bursa-pastoris JO22 chloroplast DNA.</title>
        <authorList>
            <person name="Hosouchi T."/>
            <person name="Tsuruoka H."/>
            <person name="Kotani H."/>
        </authorList>
    </citation>
    <scope>NUCLEOTIDE SEQUENCE [LARGE SCALE GENOMIC DNA]</scope>
</reference>
<protein>
    <recommendedName>
        <fullName evidence="1">NAD(P)H-quinone oxidoreductase subunit 4L, chloroplastic</fullName>
        <ecNumber evidence="1">7.1.1.-</ecNumber>
    </recommendedName>
    <alternativeName>
        <fullName evidence="1">NAD(P)H dehydrogenase subunit 4L</fullName>
    </alternativeName>
    <alternativeName>
        <fullName evidence="1">NADH-plastoquinone oxidoreductase subunit 4L</fullName>
    </alternativeName>
</protein>